<gene>
    <name evidence="1" type="primary">recO</name>
    <name type="ordered locus">Bcen_0656</name>
</gene>
<comment type="function">
    <text evidence="1">Involved in DNA repair and RecF pathway recombination.</text>
</comment>
<comment type="similarity">
    <text evidence="1">Belongs to the RecO family.</text>
</comment>
<name>RECO_BURO1</name>
<dbReference type="EMBL" id="CP000378">
    <property type="protein sequence ID" value="ABF75566.1"/>
    <property type="molecule type" value="Genomic_DNA"/>
</dbReference>
<dbReference type="SMR" id="Q1BXT9"/>
<dbReference type="HOGENOM" id="CLU_066645_0_0_4"/>
<dbReference type="GO" id="GO:0043590">
    <property type="term" value="C:bacterial nucleoid"/>
    <property type="evidence" value="ECO:0007669"/>
    <property type="project" value="TreeGrafter"/>
</dbReference>
<dbReference type="GO" id="GO:0006310">
    <property type="term" value="P:DNA recombination"/>
    <property type="evidence" value="ECO:0007669"/>
    <property type="project" value="UniProtKB-UniRule"/>
</dbReference>
<dbReference type="GO" id="GO:0006302">
    <property type="term" value="P:double-strand break repair"/>
    <property type="evidence" value="ECO:0007669"/>
    <property type="project" value="TreeGrafter"/>
</dbReference>
<dbReference type="Gene3D" id="2.40.50.140">
    <property type="entry name" value="Nucleic acid-binding proteins"/>
    <property type="match status" value="1"/>
</dbReference>
<dbReference type="Gene3D" id="1.20.1440.120">
    <property type="entry name" value="Recombination protein O, C-terminal domain"/>
    <property type="match status" value="1"/>
</dbReference>
<dbReference type="HAMAP" id="MF_00201">
    <property type="entry name" value="RecO"/>
    <property type="match status" value="1"/>
</dbReference>
<dbReference type="InterPro" id="IPR037278">
    <property type="entry name" value="ARFGAP/RecO"/>
</dbReference>
<dbReference type="InterPro" id="IPR022572">
    <property type="entry name" value="DNA_rep/recomb_RecO_N"/>
</dbReference>
<dbReference type="InterPro" id="IPR012340">
    <property type="entry name" value="NA-bd_OB-fold"/>
</dbReference>
<dbReference type="InterPro" id="IPR003717">
    <property type="entry name" value="RecO"/>
</dbReference>
<dbReference type="InterPro" id="IPR042242">
    <property type="entry name" value="RecO_C"/>
</dbReference>
<dbReference type="NCBIfam" id="TIGR00613">
    <property type="entry name" value="reco"/>
    <property type="match status" value="1"/>
</dbReference>
<dbReference type="PANTHER" id="PTHR33991">
    <property type="entry name" value="DNA REPAIR PROTEIN RECO"/>
    <property type="match status" value="1"/>
</dbReference>
<dbReference type="PANTHER" id="PTHR33991:SF1">
    <property type="entry name" value="DNA REPAIR PROTEIN RECO"/>
    <property type="match status" value="1"/>
</dbReference>
<dbReference type="Pfam" id="PF02565">
    <property type="entry name" value="RecO_C"/>
    <property type="match status" value="1"/>
</dbReference>
<dbReference type="Pfam" id="PF11967">
    <property type="entry name" value="RecO_N"/>
    <property type="match status" value="1"/>
</dbReference>
<dbReference type="SUPFAM" id="SSF57863">
    <property type="entry name" value="ArfGap/RecO-like zinc finger"/>
    <property type="match status" value="1"/>
</dbReference>
<dbReference type="SUPFAM" id="SSF50249">
    <property type="entry name" value="Nucleic acid-binding proteins"/>
    <property type="match status" value="1"/>
</dbReference>
<evidence type="ECO:0000255" key="1">
    <source>
        <dbReference type="HAMAP-Rule" id="MF_00201"/>
    </source>
</evidence>
<evidence type="ECO:0000256" key="2">
    <source>
        <dbReference type="SAM" id="MobiDB-lite"/>
    </source>
</evidence>
<proteinExistence type="inferred from homology"/>
<protein>
    <recommendedName>
        <fullName evidence="1">DNA repair protein RecO</fullName>
    </recommendedName>
    <alternativeName>
        <fullName evidence="1">Recombination protein O</fullName>
    </alternativeName>
</protein>
<organism>
    <name type="scientific">Burkholderia orbicola (strain AU 1054)</name>
    <dbReference type="NCBI Taxonomy" id="331271"/>
    <lineage>
        <taxon>Bacteria</taxon>
        <taxon>Pseudomonadati</taxon>
        <taxon>Pseudomonadota</taxon>
        <taxon>Betaproteobacteria</taxon>
        <taxon>Burkholderiales</taxon>
        <taxon>Burkholderiaceae</taxon>
        <taxon>Burkholderia</taxon>
        <taxon>Burkholderia cepacia complex</taxon>
        <taxon>Burkholderia orbicola</taxon>
    </lineage>
</organism>
<keyword id="KW-0227">DNA damage</keyword>
<keyword id="KW-0233">DNA recombination</keyword>
<keyword id="KW-0234">DNA repair</keyword>
<reference key="1">
    <citation type="submission" date="2006-05" db="EMBL/GenBank/DDBJ databases">
        <title>Complete sequence of chromosome 1 of Burkholderia cenocepacia AU 1054.</title>
        <authorList>
            <consortium name="US DOE Joint Genome Institute"/>
            <person name="Copeland A."/>
            <person name="Lucas S."/>
            <person name="Lapidus A."/>
            <person name="Barry K."/>
            <person name="Detter J.C."/>
            <person name="Glavina del Rio T."/>
            <person name="Hammon N."/>
            <person name="Israni S."/>
            <person name="Dalin E."/>
            <person name="Tice H."/>
            <person name="Pitluck S."/>
            <person name="Chain P."/>
            <person name="Malfatti S."/>
            <person name="Shin M."/>
            <person name="Vergez L."/>
            <person name="Schmutz J."/>
            <person name="Larimer F."/>
            <person name="Land M."/>
            <person name="Hauser L."/>
            <person name="Kyrpides N."/>
            <person name="Lykidis A."/>
            <person name="LiPuma J.J."/>
            <person name="Konstantinidis K."/>
            <person name="Tiedje J.M."/>
            <person name="Richardson P."/>
        </authorList>
    </citation>
    <scope>NUCLEOTIDE SEQUENCE [LARGE SCALE GENOMIC DNA]</scope>
    <source>
        <strain>AU 1054</strain>
    </source>
</reference>
<accession>Q1BXT9</accession>
<sequence>MGTNDALTSTEDAVTAGANDAPLPAPPEPPRKARRATSRTSDFRVAEQPAFVLHSYPYRETSLIVDVLTRDHGRLALVAKGAKRPHSALRGVLQTFQPLLLSWSGKSEVRTLTGAEWVGGMLPLGGDGLLCGFYANELLVKFCAREDPQPPLFNHYVLTLTRLAHGEPAVQVLRSFERVLLRETGYAMALNRTVARRAVEPERRYVFDPERGVRNADDDVPSHWPVITGQTLLDMEQDDYHRAQTVAQSKTLMRFLLNTYLGGTPLATRQILIDLQNL</sequence>
<feature type="chain" id="PRO_0000264806" description="DNA repair protein RecO">
    <location>
        <begin position="1"/>
        <end position="278"/>
    </location>
</feature>
<feature type="region of interest" description="Disordered" evidence="2">
    <location>
        <begin position="1"/>
        <end position="41"/>
    </location>
</feature>
<feature type="compositionally biased region" description="Polar residues" evidence="2">
    <location>
        <begin position="1"/>
        <end position="12"/>
    </location>
</feature>